<keyword id="KW-0004">4Fe-4S</keyword>
<keyword id="KW-0963">Cytoplasm</keyword>
<keyword id="KW-1015">Disulfide bond</keyword>
<keyword id="KW-0408">Iron</keyword>
<keyword id="KW-0411">Iron-sulfur</keyword>
<keyword id="KW-0479">Metal-binding</keyword>
<keyword id="KW-0489">Methyltransferase</keyword>
<keyword id="KW-1185">Reference proteome</keyword>
<keyword id="KW-0698">rRNA processing</keyword>
<keyword id="KW-0949">S-adenosyl-L-methionine</keyword>
<keyword id="KW-0808">Transferase</keyword>
<keyword id="KW-0819">tRNA processing</keyword>
<feature type="chain" id="PRO_0000350176" description="Probable dual-specificity RNA methyltransferase RlmN">
    <location>
        <begin position="1"/>
        <end position="349"/>
    </location>
</feature>
<feature type="domain" description="Radical SAM core" evidence="2">
    <location>
        <begin position="100"/>
        <end position="324"/>
    </location>
</feature>
<feature type="active site" description="Proton acceptor" evidence="1">
    <location>
        <position position="94"/>
    </location>
</feature>
<feature type="active site" description="S-methylcysteine intermediate" evidence="1">
    <location>
        <position position="335"/>
    </location>
</feature>
<feature type="binding site" evidence="1">
    <location>
        <position position="114"/>
    </location>
    <ligand>
        <name>[4Fe-4S] cluster</name>
        <dbReference type="ChEBI" id="CHEBI:49883"/>
        <note>4Fe-4S-S-AdoMet</note>
    </ligand>
</feature>
<feature type="binding site" evidence="1">
    <location>
        <position position="118"/>
    </location>
    <ligand>
        <name>[4Fe-4S] cluster</name>
        <dbReference type="ChEBI" id="CHEBI:49883"/>
        <note>4Fe-4S-S-AdoMet</note>
    </ligand>
</feature>
<feature type="binding site" evidence="1">
    <location>
        <position position="121"/>
    </location>
    <ligand>
        <name>[4Fe-4S] cluster</name>
        <dbReference type="ChEBI" id="CHEBI:49883"/>
        <note>4Fe-4S-S-AdoMet</note>
    </ligand>
</feature>
<feature type="binding site" evidence="1">
    <location>
        <begin position="161"/>
        <end position="162"/>
    </location>
    <ligand>
        <name>S-adenosyl-L-methionine</name>
        <dbReference type="ChEBI" id="CHEBI:59789"/>
    </ligand>
</feature>
<feature type="binding site" evidence="1">
    <location>
        <position position="193"/>
    </location>
    <ligand>
        <name>S-adenosyl-L-methionine</name>
        <dbReference type="ChEBI" id="CHEBI:59789"/>
    </ligand>
</feature>
<feature type="binding site" evidence="1">
    <location>
        <begin position="216"/>
        <end position="218"/>
    </location>
    <ligand>
        <name>S-adenosyl-L-methionine</name>
        <dbReference type="ChEBI" id="CHEBI:59789"/>
    </ligand>
</feature>
<feature type="binding site" evidence="1">
    <location>
        <position position="292"/>
    </location>
    <ligand>
        <name>S-adenosyl-L-methionine</name>
        <dbReference type="ChEBI" id="CHEBI:59789"/>
    </ligand>
</feature>
<feature type="disulfide bond" description="(transient)" evidence="1">
    <location>
        <begin position="107"/>
        <end position="335"/>
    </location>
</feature>
<proteinExistence type="inferred from homology"/>
<comment type="function">
    <text evidence="1">Specifically methylates position 2 of adenine 2503 in 23S rRNA and position 2 of adenine 37 in tRNAs.</text>
</comment>
<comment type="catalytic activity">
    <reaction evidence="1">
        <text>adenosine(2503) in 23S rRNA + 2 reduced [2Fe-2S]-[ferredoxin] + 2 S-adenosyl-L-methionine = 2-methyladenosine(2503) in 23S rRNA + 5'-deoxyadenosine + L-methionine + 2 oxidized [2Fe-2S]-[ferredoxin] + S-adenosyl-L-homocysteine</text>
        <dbReference type="Rhea" id="RHEA:42916"/>
        <dbReference type="Rhea" id="RHEA-COMP:10000"/>
        <dbReference type="Rhea" id="RHEA-COMP:10001"/>
        <dbReference type="Rhea" id="RHEA-COMP:10152"/>
        <dbReference type="Rhea" id="RHEA-COMP:10282"/>
        <dbReference type="ChEBI" id="CHEBI:17319"/>
        <dbReference type="ChEBI" id="CHEBI:33737"/>
        <dbReference type="ChEBI" id="CHEBI:33738"/>
        <dbReference type="ChEBI" id="CHEBI:57844"/>
        <dbReference type="ChEBI" id="CHEBI:57856"/>
        <dbReference type="ChEBI" id="CHEBI:59789"/>
        <dbReference type="ChEBI" id="CHEBI:74411"/>
        <dbReference type="ChEBI" id="CHEBI:74497"/>
        <dbReference type="EC" id="2.1.1.192"/>
    </reaction>
</comment>
<comment type="catalytic activity">
    <reaction evidence="1">
        <text>adenosine(37) in tRNA + 2 reduced [2Fe-2S]-[ferredoxin] + 2 S-adenosyl-L-methionine = 2-methyladenosine(37) in tRNA + 5'-deoxyadenosine + L-methionine + 2 oxidized [2Fe-2S]-[ferredoxin] + S-adenosyl-L-homocysteine</text>
        <dbReference type="Rhea" id="RHEA:43332"/>
        <dbReference type="Rhea" id="RHEA-COMP:10000"/>
        <dbReference type="Rhea" id="RHEA-COMP:10001"/>
        <dbReference type="Rhea" id="RHEA-COMP:10162"/>
        <dbReference type="Rhea" id="RHEA-COMP:10485"/>
        <dbReference type="ChEBI" id="CHEBI:17319"/>
        <dbReference type="ChEBI" id="CHEBI:33737"/>
        <dbReference type="ChEBI" id="CHEBI:33738"/>
        <dbReference type="ChEBI" id="CHEBI:57844"/>
        <dbReference type="ChEBI" id="CHEBI:57856"/>
        <dbReference type="ChEBI" id="CHEBI:59789"/>
        <dbReference type="ChEBI" id="CHEBI:74411"/>
        <dbReference type="ChEBI" id="CHEBI:74497"/>
        <dbReference type="EC" id="2.1.1.192"/>
    </reaction>
</comment>
<comment type="cofactor">
    <cofactor evidence="1">
        <name>[4Fe-4S] cluster</name>
        <dbReference type="ChEBI" id="CHEBI:49883"/>
    </cofactor>
    <text evidence="1">Binds 1 [4Fe-4S] cluster. The cluster is coordinated with 3 cysteines and an exchangeable S-adenosyl-L-methionine.</text>
</comment>
<comment type="subcellular location">
    <subcellularLocation>
        <location evidence="1">Cytoplasm</location>
    </subcellularLocation>
</comment>
<comment type="miscellaneous">
    <text evidence="1">Reaction proceeds by a ping-pong mechanism involving intermediate methylation of a conserved cysteine residue.</text>
</comment>
<comment type="similarity">
    <text evidence="1">Belongs to the radical SAM superfamily. RlmN family.</text>
</comment>
<gene>
    <name evidence="1" type="primary">rlmN</name>
    <name type="ordered locus">FMG_0665</name>
</gene>
<name>RLMN_FINM2</name>
<accession>B0S143</accession>
<sequence>MQNKIILENMTVDELKEFFVNNGEKPFRALQYFQAIHKNRIFNPDEMTNFSNSLRGKLNQYNDIKNCSIIKRIDSKLDNTKKYLIEMSDGNIVETVFMQYKTHTSICLSTQIGCKMGCKFCASTKKSFVRNLQPYEMCAQIYLVENDLDIRINNIVLMGIGEPLDNYDNVSRFIDLITDKDGQDMSIRNITLSTCGLVDKIIRLANDDIGINITISLHNPFDNERNKLMPIGNKYSIEEILDACDYYFKKTKRRIGFEYTVIENVNDSKKYMDKLVSLLKNRNCLLNLITLNPIEEFNQKSPDRYKMTEFMEYMNKNNVNTTIRRKQGIDIDGACGQLRINNMTKRGVK</sequence>
<reference key="1">
    <citation type="journal article" date="2008" name="DNA Res.">
        <title>Complete genome sequence of Finegoldia magna, an anaerobic opportunistic pathogen.</title>
        <authorList>
            <person name="Goto T."/>
            <person name="Yamashita A."/>
            <person name="Hirakawa H."/>
            <person name="Matsutani M."/>
            <person name="Todo K."/>
            <person name="Ohshima K."/>
            <person name="Toh H."/>
            <person name="Miyamoto K."/>
            <person name="Kuhara S."/>
            <person name="Hattori M."/>
            <person name="Shimizu T."/>
            <person name="Akimoto S."/>
        </authorList>
    </citation>
    <scope>NUCLEOTIDE SEQUENCE [LARGE SCALE GENOMIC DNA]</scope>
    <source>
        <strain>ATCC 29328 / DSM 20472 / WAL 2508</strain>
    </source>
</reference>
<protein>
    <recommendedName>
        <fullName evidence="1">Probable dual-specificity RNA methyltransferase RlmN</fullName>
        <ecNumber evidence="1">2.1.1.192</ecNumber>
    </recommendedName>
    <alternativeName>
        <fullName evidence="1">23S rRNA (adenine(2503)-C(2))-methyltransferase</fullName>
    </alternativeName>
    <alternativeName>
        <fullName evidence="1">23S rRNA m2A2503 methyltransferase</fullName>
    </alternativeName>
    <alternativeName>
        <fullName evidence="1">Ribosomal RNA large subunit methyltransferase N</fullName>
    </alternativeName>
    <alternativeName>
        <fullName evidence="1">tRNA (adenine(37)-C(2))-methyltransferase</fullName>
    </alternativeName>
    <alternativeName>
        <fullName evidence="1">tRNA m2A37 methyltransferase</fullName>
    </alternativeName>
</protein>
<evidence type="ECO:0000255" key="1">
    <source>
        <dbReference type="HAMAP-Rule" id="MF_01849"/>
    </source>
</evidence>
<evidence type="ECO:0000255" key="2">
    <source>
        <dbReference type="PROSITE-ProRule" id="PRU01266"/>
    </source>
</evidence>
<organism>
    <name type="scientific">Finegoldia magna (strain ATCC 29328 / DSM 20472 / WAL 2508)</name>
    <name type="common">Peptostreptococcus magnus</name>
    <dbReference type="NCBI Taxonomy" id="334413"/>
    <lineage>
        <taxon>Bacteria</taxon>
        <taxon>Bacillati</taxon>
        <taxon>Bacillota</taxon>
        <taxon>Tissierellia</taxon>
        <taxon>Tissierellales</taxon>
        <taxon>Peptoniphilaceae</taxon>
        <taxon>Finegoldia</taxon>
    </lineage>
</organism>
<dbReference type="EC" id="2.1.1.192" evidence="1"/>
<dbReference type="EMBL" id="AP008971">
    <property type="protein sequence ID" value="BAG08083.1"/>
    <property type="molecule type" value="Genomic_DNA"/>
</dbReference>
<dbReference type="RefSeq" id="WP_012290554.1">
    <property type="nucleotide sequence ID" value="NC_010376.1"/>
</dbReference>
<dbReference type="SMR" id="B0S143"/>
<dbReference type="STRING" id="334413.FMG_0665"/>
<dbReference type="KEGG" id="fma:FMG_0665"/>
<dbReference type="eggNOG" id="COG0820">
    <property type="taxonomic scope" value="Bacteria"/>
</dbReference>
<dbReference type="HOGENOM" id="CLU_029101_0_1_9"/>
<dbReference type="Proteomes" id="UP000001319">
    <property type="component" value="Chromosome"/>
</dbReference>
<dbReference type="GO" id="GO:0005737">
    <property type="term" value="C:cytoplasm"/>
    <property type="evidence" value="ECO:0007669"/>
    <property type="project" value="UniProtKB-SubCell"/>
</dbReference>
<dbReference type="GO" id="GO:0051539">
    <property type="term" value="F:4 iron, 4 sulfur cluster binding"/>
    <property type="evidence" value="ECO:0007669"/>
    <property type="project" value="UniProtKB-UniRule"/>
</dbReference>
<dbReference type="GO" id="GO:0046872">
    <property type="term" value="F:metal ion binding"/>
    <property type="evidence" value="ECO:0007669"/>
    <property type="project" value="UniProtKB-KW"/>
</dbReference>
<dbReference type="GO" id="GO:0070040">
    <property type="term" value="F:rRNA (adenine(2503)-C2-)-methyltransferase activity"/>
    <property type="evidence" value="ECO:0007669"/>
    <property type="project" value="UniProtKB-UniRule"/>
</dbReference>
<dbReference type="GO" id="GO:0019843">
    <property type="term" value="F:rRNA binding"/>
    <property type="evidence" value="ECO:0007669"/>
    <property type="project" value="UniProtKB-UniRule"/>
</dbReference>
<dbReference type="GO" id="GO:0002935">
    <property type="term" value="F:tRNA (adenine(37)-C2)-methyltransferase activity"/>
    <property type="evidence" value="ECO:0007669"/>
    <property type="project" value="UniProtKB-UniRule"/>
</dbReference>
<dbReference type="GO" id="GO:0000049">
    <property type="term" value="F:tRNA binding"/>
    <property type="evidence" value="ECO:0007669"/>
    <property type="project" value="UniProtKB-UniRule"/>
</dbReference>
<dbReference type="GO" id="GO:0070475">
    <property type="term" value="P:rRNA base methylation"/>
    <property type="evidence" value="ECO:0007669"/>
    <property type="project" value="UniProtKB-UniRule"/>
</dbReference>
<dbReference type="GO" id="GO:0030488">
    <property type="term" value="P:tRNA methylation"/>
    <property type="evidence" value="ECO:0007669"/>
    <property type="project" value="UniProtKB-UniRule"/>
</dbReference>
<dbReference type="CDD" id="cd01335">
    <property type="entry name" value="Radical_SAM"/>
    <property type="match status" value="1"/>
</dbReference>
<dbReference type="FunFam" id="3.20.20.70:FF:000014">
    <property type="entry name" value="Probable dual-specificity RNA methyltransferase RlmN"/>
    <property type="match status" value="1"/>
</dbReference>
<dbReference type="Gene3D" id="1.10.150.530">
    <property type="match status" value="1"/>
</dbReference>
<dbReference type="Gene3D" id="3.20.20.70">
    <property type="entry name" value="Aldolase class I"/>
    <property type="match status" value="1"/>
</dbReference>
<dbReference type="HAMAP" id="MF_01849">
    <property type="entry name" value="RNA_methyltr_RlmN"/>
    <property type="match status" value="1"/>
</dbReference>
<dbReference type="InterPro" id="IPR013785">
    <property type="entry name" value="Aldolase_TIM"/>
</dbReference>
<dbReference type="InterPro" id="IPR040072">
    <property type="entry name" value="Methyltransferase_A"/>
</dbReference>
<dbReference type="InterPro" id="IPR048641">
    <property type="entry name" value="RlmN_N"/>
</dbReference>
<dbReference type="InterPro" id="IPR027492">
    <property type="entry name" value="RNA_MTrfase_RlmN"/>
</dbReference>
<dbReference type="InterPro" id="IPR004383">
    <property type="entry name" value="rRNA_lsu_MTrfase_RlmN/Cfr"/>
</dbReference>
<dbReference type="InterPro" id="IPR007197">
    <property type="entry name" value="rSAM"/>
</dbReference>
<dbReference type="NCBIfam" id="TIGR00048">
    <property type="entry name" value="rRNA_mod_RlmN"/>
    <property type="match status" value="1"/>
</dbReference>
<dbReference type="PANTHER" id="PTHR30544">
    <property type="entry name" value="23S RRNA METHYLTRANSFERASE"/>
    <property type="match status" value="1"/>
</dbReference>
<dbReference type="PANTHER" id="PTHR30544:SF5">
    <property type="entry name" value="RADICAL SAM CORE DOMAIN-CONTAINING PROTEIN"/>
    <property type="match status" value="1"/>
</dbReference>
<dbReference type="Pfam" id="PF04055">
    <property type="entry name" value="Radical_SAM"/>
    <property type="match status" value="1"/>
</dbReference>
<dbReference type="Pfam" id="PF21016">
    <property type="entry name" value="RlmN_N"/>
    <property type="match status" value="1"/>
</dbReference>
<dbReference type="PIRSF" id="PIRSF006004">
    <property type="entry name" value="CHP00048"/>
    <property type="match status" value="1"/>
</dbReference>
<dbReference type="SFLD" id="SFLDF00275">
    <property type="entry name" value="adenosine_C2_methyltransferase"/>
    <property type="match status" value="1"/>
</dbReference>
<dbReference type="SFLD" id="SFLDG01062">
    <property type="entry name" value="methyltransferase_(Class_A)"/>
    <property type="match status" value="1"/>
</dbReference>
<dbReference type="SUPFAM" id="SSF102114">
    <property type="entry name" value="Radical SAM enzymes"/>
    <property type="match status" value="1"/>
</dbReference>
<dbReference type="PROSITE" id="PS51918">
    <property type="entry name" value="RADICAL_SAM"/>
    <property type="match status" value="1"/>
</dbReference>